<keyword id="KW-0223">Dioxygenase</keyword>
<keyword id="KW-0349">Heme</keyword>
<keyword id="KW-0408">Iron</keyword>
<keyword id="KW-0479">Metal-binding</keyword>
<keyword id="KW-0560">Oxidoreductase</keyword>
<keyword id="KW-0823">Tryptophan catabolism</keyword>
<protein>
    <recommendedName>
        <fullName evidence="1">Tryptophan 2,3-dioxygenase</fullName>
        <shortName evidence="1">TDO</shortName>
        <ecNumber evidence="1">1.13.11.11</ecNumber>
    </recommendedName>
    <alternativeName>
        <fullName evidence="1">Tryptamin 2,3-dioxygenase</fullName>
    </alternativeName>
    <alternativeName>
        <fullName evidence="1">Tryptophan oxygenase</fullName>
        <shortName evidence="1">TO</shortName>
        <shortName evidence="1">TRPO</shortName>
    </alternativeName>
    <alternativeName>
        <fullName evidence="1">Tryptophan pyrrolase</fullName>
    </alternativeName>
    <alternativeName>
        <fullName evidence="1">Tryptophanase</fullName>
    </alternativeName>
</protein>
<dbReference type="EC" id="1.13.11.11" evidence="1"/>
<dbReference type="EMBL" id="CP001103">
    <property type="protein sequence ID" value="AEA97384.1"/>
    <property type="molecule type" value="Genomic_DNA"/>
</dbReference>
<dbReference type="RefSeq" id="WP_012517726.1">
    <property type="nucleotide sequence ID" value="NC_011138.3"/>
</dbReference>
<dbReference type="SMR" id="B4RUH2"/>
<dbReference type="KEGG" id="amc:MADE_1006210"/>
<dbReference type="HOGENOM" id="CLU_045599_1_1_6"/>
<dbReference type="UniPathway" id="UPA00333">
    <property type="reaction ID" value="UER00453"/>
</dbReference>
<dbReference type="Proteomes" id="UP000001870">
    <property type="component" value="Chromosome"/>
</dbReference>
<dbReference type="GO" id="GO:0020037">
    <property type="term" value="F:heme binding"/>
    <property type="evidence" value="ECO:0000250"/>
    <property type="project" value="UniProtKB"/>
</dbReference>
<dbReference type="GO" id="GO:0046872">
    <property type="term" value="F:metal ion binding"/>
    <property type="evidence" value="ECO:0007669"/>
    <property type="project" value="UniProtKB-KW"/>
</dbReference>
<dbReference type="GO" id="GO:0004833">
    <property type="term" value="F:tryptophan 2,3-dioxygenase activity"/>
    <property type="evidence" value="ECO:0000250"/>
    <property type="project" value="UniProtKB"/>
</dbReference>
<dbReference type="GO" id="GO:0019442">
    <property type="term" value="P:L-tryptophan catabolic process to acetyl-CoA"/>
    <property type="evidence" value="ECO:0007669"/>
    <property type="project" value="TreeGrafter"/>
</dbReference>
<dbReference type="GO" id="GO:0019441">
    <property type="term" value="P:L-tryptophan catabolic process to kynurenine"/>
    <property type="evidence" value="ECO:0000250"/>
    <property type="project" value="UniProtKB"/>
</dbReference>
<dbReference type="Gene3D" id="1.10.287.3810">
    <property type="match status" value="1"/>
</dbReference>
<dbReference type="Gene3D" id="1.20.58.480">
    <property type="match status" value="1"/>
</dbReference>
<dbReference type="HAMAP" id="MF_01972">
    <property type="entry name" value="T23O"/>
    <property type="match status" value="1"/>
</dbReference>
<dbReference type="InterPro" id="IPR037217">
    <property type="entry name" value="Trp/Indoleamine_2_3_dOase-like"/>
</dbReference>
<dbReference type="InterPro" id="IPR004981">
    <property type="entry name" value="Trp_2_3_dOase"/>
</dbReference>
<dbReference type="PANTHER" id="PTHR10138">
    <property type="entry name" value="TRYPTOPHAN 2,3-DIOXYGENASE"/>
    <property type="match status" value="1"/>
</dbReference>
<dbReference type="PANTHER" id="PTHR10138:SF0">
    <property type="entry name" value="TRYPTOPHAN 2,3-DIOXYGENASE"/>
    <property type="match status" value="1"/>
</dbReference>
<dbReference type="Pfam" id="PF03301">
    <property type="entry name" value="Trp_dioxygenase"/>
    <property type="match status" value="1"/>
</dbReference>
<dbReference type="SUPFAM" id="SSF140959">
    <property type="entry name" value="Indolic compounds 2,3-dioxygenase-like"/>
    <property type="match status" value="1"/>
</dbReference>
<gene>
    <name evidence="1" type="primary">kynA</name>
    <name type="ordered locus">MADE_1006210</name>
</gene>
<accession>B4RUH2</accession>
<accession>F2G4T0</accession>
<evidence type="ECO:0000255" key="1">
    <source>
        <dbReference type="HAMAP-Rule" id="MF_01972"/>
    </source>
</evidence>
<organism>
    <name type="scientific">Alteromonas mediterranea (strain DSM 17117 / CIP 110805 / LMG 28347 / Deep ecotype)</name>
    <dbReference type="NCBI Taxonomy" id="1774373"/>
    <lineage>
        <taxon>Bacteria</taxon>
        <taxon>Pseudomonadati</taxon>
        <taxon>Pseudomonadota</taxon>
        <taxon>Gammaproteobacteria</taxon>
        <taxon>Alteromonadales</taxon>
        <taxon>Alteromonadaceae</taxon>
        <taxon>Alteromonas/Salinimonas group</taxon>
        <taxon>Alteromonas</taxon>
    </lineage>
</organism>
<name>T23O_ALTMD</name>
<proteinExistence type="inferred from homology"/>
<comment type="function">
    <text evidence="1">Heme-dependent dioxygenase that catalyzes the oxidative cleavage of the L-tryptophan (L-Trp) pyrrole ring and converts L-tryptophan to N-formyl-L-kynurenine. Catalyzes the oxidative cleavage of the indole moiety.</text>
</comment>
<comment type="catalytic activity">
    <reaction evidence="1">
        <text>L-tryptophan + O2 = N-formyl-L-kynurenine</text>
        <dbReference type="Rhea" id="RHEA:24536"/>
        <dbReference type="ChEBI" id="CHEBI:15379"/>
        <dbReference type="ChEBI" id="CHEBI:57912"/>
        <dbReference type="ChEBI" id="CHEBI:58629"/>
        <dbReference type="EC" id="1.13.11.11"/>
    </reaction>
</comment>
<comment type="cofactor">
    <cofactor evidence="1">
        <name>heme</name>
        <dbReference type="ChEBI" id="CHEBI:30413"/>
    </cofactor>
    <text evidence="1">Binds 1 heme group per subunit.</text>
</comment>
<comment type="pathway">
    <text evidence="1">Amino-acid degradation; L-tryptophan degradation via kynurenine pathway; L-kynurenine from L-tryptophan: step 1/2.</text>
</comment>
<comment type="subunit">
    <text evidence="1">Homotetramer.</text>
</comment>
<comment type="similarity">
    <text evidence="1">Belongs to the tryptophan 2,3-dioxygenase family.</text>
</comment>
<feature type="chain" id="PRO_0000360079" description="Tryptophan 2,3-dioxygenase">
    <location>
        <begin position="1"/>
        <end position="362"/>
    </location>
</feature>
<feature type="binding site" evidence="1">
    <location>
        <begin position="40"/>
        <end position="44"/>
    </location>
    <ligand>
        <name>substrate</name>
    </ligand>
</feature>
<feature type="binding site" evidence="1">
    <location>
        <position position="111"/>
    </location>
    <ligand>
        <name>substrate</name>
    </ligand>
</feature>
<feature type="binding site" description="axial binding residue" evidence="1">
    <location>
        <position position="297"/>
    </location>
    <ligand>
        <name>heme</name>
        <dbReference type="ChEBI" id="CHEBI:30413"/>
    </ligand>
    <ligandPart>
        <name>Fe</name>
        <dbReference type="ChEBI" id="CHEBI:18248"/>
    </ligandPart>
</feature>
<feature type="binding site" evidence="1">
    <location>
        <position position="311"/>
    </location>
    <ligand>
        <name>substrate</name>
    </ligand>
</feature>
<sequence>MKKNIEPCYYGDYLQLDKILGAQDLQSEKYGDGAHEEMLFIIVHQVYELWFKQVLHELNAVIDTFNQEAVKDQQLTQVVHRLQRIIQIQKLMNDQIAIMETMTPQQFLSFRDYLVPASGFQSIQFKRLEISLGLKREFRIDFDKQSFYNRLTDKDRALLENLENKPSLFELVDKWLSRMPLLKTEDFDFWQYYKDAADEMLKDDHHTVSTSDMLSDTEKRQEIKDLQATMENFDALFNETQFEKLRGEGKFRLSHNALLSALFIKQYSEEPIFNLPFQLITALTEIDEQLTIWRYRHAMMVQRMLGTKIGTGGSSGHHYLKKTTESNRIYLDFFNMATFLLPKSALPDLPESVRRRLGFYLQ</sequence>
<reference key="1">
    <citation type="journal article" date="2008" name="ISME J.">
        <title>Comparative genomics of two ecotypes of the marine planktonic copiotroph Alteromonas macleodii suggests alternative lifestyles associated with different kinds of particulate organic matter.</title>
        <authorList>
            <person name="Ivars-Martinez E."/>
            <person name="Martin-Cuadrado A.-B."/>
            <person name="D'Auria G."/>
            <person name="Mira A."/>
            <person name="Ferriera S."/>
            <person name="Johnson J."/>
            <person name="Friedman R."/>
            <person name="Rodriguez-Valera F."/>
        </authorList>
    </citation>
    <scope>NUCLEOTIDE SEQUENCE [LARGE SCALE GENOMIC DNA]</scope>
    <source>
        <strain>DSM 17117 / CIP 110805 / LMG 28347 / Deep ecotype</strain>
    </source>
</reference>